<geneLocation type="chloroplast"/>
<evidence type="ECO:0000250" key="1"/>
<evidence type="ECO:0000255" key="2"/>
<evidence type="ECO:0000305" key="3"/>
<protein>
    <recommendedName>
        <fullName>NAD(P)H-quinone oxidoreductase subunit 5, chloroplastic</fullName>
        <ecNumber>7.1.1.-</ecNumber>
    </recommendedName>
    <alternativeName>
        <fullName>NAD(P)H dehydrogenase subunit 5</fullName>
    </alternativeName>
    <alternativeName>
        <fullName>NADH-plastoquinone oxidoreductase subunit 5</fullName>
    </alternativeName>
</protein>
<feature type="chain" id="PRO_0000360965" description="NAD(P)H-quinone oxidoreductase subunit 5, chloroplastic">
    <location>
        <begin position="1"/>
        <end position="720"/>
    </location>
</feature>
<feature type="transmembrane region" description="Helical" evidence="2">
    <location>
        <begin position="9"/>
        <end position="29"/>
    </location>
</feature>
<feature type="transmembrane region" description="Helical" evidence="2">
    <location>
        <begin position="39"/>
        <end position="59"/>
    </location>
</feature>
<feature type="transmembrane region" description="Helical" evidence="2">
    <location>
        <begin position="87"/>
        <end position="107"/>
    </location>
</feature>
<feature type="transmembrane region" description="Helical" evidence="2">
    <location>
        <begin position="125"/>
        <end position="145"/>
    </location>
</feature>
<feature type="transmembrane region" description="Helical" evidence="2">
    <location>
        <begin position="147"/>
        <end position="167"/>
    </location>
</feature>
<feature type="transmembrane region" description="Helical" evidence="2">
    <location>
        <begin position="189"/>
        <end position="209"/>
    </location>
</feature>
<feature type="transmembrane region" description="Helical" evidence="2">
    <location>
        <begin position="221"/>
        <end position="239"/>
    </location>
</feature>
<feature type="transmembrane region" description="Helical" evidence="2">
    <location>
        <begin position="258"/>
        <end position="278"/>
    </location>
</feature>
<feature type="transmembrane region" description="Helical" evidence="2">
    <location>
        <begin position="286"/>
        <end position="306"/>
    </location>
</feature>
<feature type="transmembrane region" description="Helical" evidence="2">
    <location>
        <begin position="327"/>
        <end position="347"/>
    </location>
</feature>
<feature type="transmembrane region" description="Helical" evidence="2">
    <location>
        <begin position="354"/>
        <end position="374"/>
    </location>
</feature>
<feature type="transmembrane region" description="Helical" evidence="2">
    <location>
        <begin position="395"/>
        <end position="415"/>
    </location>
</feature>
<feature type="transmembrane region" description="Helical" evidence="2">
    <location>
        <begin position="434"/>
        <end position="454"/>
    </location>
</feature>
<feature type="transmembrane region" description="Helical" evidence="2">
    <location>
        <begin position="530"/>
        <end position="550"/>
    </location>
</feature>
<feature type="transmembrane region" description="Helical" evidence="2">
    <location>
        <begin position="590"/>
        <end position="610"/>
    </location>
</feature>
<feature type="transmembrane region" description="Helical" evidence="2">
    <location>
        <begin position="700"/>
        <end position="720"/>
    </location>
</feature>
<name>NU5C_PHYPA</name>
<reference key="1">
    <citation type="journal article" date="2003" name="Nucleic Acids Res.">
        <title>Complete chloroplast DNA sequence of the moss Physcomitrella patens: evidence for the loss and relocation of rpoA from the chloroplast to the nucleus.</title>
        <authorList>
            <person name="Sugiura C."/>
            <person name="Kobayashi Y."/>
            <person name="Setsuyuki A."/>
            <person name="Sugita C."/>
            <person name="Sugita M."/>
        </authorList>
    </citation>
    <scope>NUCLEOTIDE SEQUENCE [LARGE SCALE GENOMIC DNA]</scope>
    <source>
        <strain>cv. Gransden 2004</strain>
    </source>
</reference>
<accession>Q6YXQ6</accession>
<comment type="function">
    <text evidence="1">NDH shuttles electrons from NAD(P)H:plastoquinone, via FMN and iron-sulfur (Fe-S) centers, to quinones in the photosynthetic chain and possibly in a chloroplast respiratory chain. The immediate electron acceptor for the enzyme in this species is believed to be plastoquinone. Couples the redox reaction to proton translocation, and thus conserves the redox energy in a proton gradient (By similarity).</text>
</comment>
<comment type="catalytic activity">
    <reaction>
        <text>a plastoquinone + NADH + (n+1) H(+)(in) = a plastoquinol + NAD(+) + n H(+)(out)</text>
        <dbReference type="Rhea" id="RHEA:42608"/>
        <dbReference type="Rhea" id="RHEA-COMP:9561"/>
        <dbReference type="Rhea" id="RHEA-COMP:9562"/>
        <dbReference type="ChEBI" id="CHEBI:15378"/>
        <dbReference type="ChEBI" id="CHEBI:17757"/>
        <dbReference type="ChEBI" id="CHEBI:57540"/>
        <dbReference type="ChEBI" id="CHEBI:57945"/>
        <dbReference type="ChEBI" id="CHEBI:62192"/>
    </reaction>
</comment>
<comment type="catalytic activity">
    <reaction>
        <text>a plastoquinone + NADPH + (n+1) H(+)(in) = a plastoquinol + NADP(+) + n H(+)(out)</text>
        <dbReference type="Rhea" id="RHEA:42612"/>
        <dbReference type="Rhea" id="RHEA-COMP:9561"/>
        <dbReference type="Rhea" id="RHEA-COMP:9562"/>
        <dbReference type="ChEBI" id="CHEBI:15378"/>
        <dbReference type="ChEBI" id="CHEBI:17757"/>
        <dbReference type="ChEBI" id="CHEBI:57783"/>
        <dbReference type="ChEBI" id="CHEBI:58349"/>
        <dbReference type="ChEBI" id="CHEBI:62192"/>
    </reaction>
</comment>
<comment type="subunit">
    <text evidence="1">NDH is composed of at least 16 different subunits, 5 of which are encoded in the nucleus.</text>
</comment>
<comment type="subcellular location">
    <subcellularLocation>
        <location evidence="1">Plastid</location>
        <location evidence="1">Chloroplast thylakoid membrane</location>
        <topology evidence="1">Multi-pass membrane protein</topology>
    </subcellularLocation>
</comment>
<comment type="similarity">
    <text evidence="3">Belongs to the complex I subunit 5 family.</text>
</comment>
<gene>
    <name type="primary">ndhF</name>
</gene>
<proteinExistence type="inferred from homology"/>
<organism>
    <name type="scientific">Physcomitrium patens</name>
    <name type="common">Spreading-leaved earth moss</name>
    <name type="synonym">Physcomitrella patens</name>
    <dbReference type="NCBI Taxonomy" id="3218"/>
    <lineage>
        <taxon>Eukaryota</taxon>
        <taxon>Viridiplantae</taxon>
        <taxon>Streptophyta</taxon>
        <taxon>Embryophyta</taxon>
        <taxon>Bryophyta</taxon>
        <taxon>Bryophytina</taxon>
        <taxon>Bryopsida</taxon>
        <taxon>Funariidae</taxon>
        <taxon>Funariales</taxon>
        <taxon>Funariaceae</taxon>
        <taxon>Physcomitrium</taxon>
    </lineage>
</organism>
<dbReference type="EC" id="7.1.1.-"/>
<dbReference type="EMBL" id="AP005672">
    <property type="protein sequence ID" value="BAC85085.1"/>
    <property type="molecule type" value="Genomic_DNA"/>
</dbReference>
<dbReference type="RefSeq" id="NP_904235.1">
    <property type="nucleotide sequence ID" value="NC_005087.2"/>
</dbReference>
<dbReference type="SMR" id="Q6YXQ6"/>
<dbReference type="FunCoup" id="Q6YXQ6">
    <property type="interactions" value="14"/>
</dbReference>
<dbReference type="STRING" id="3218.Q6YXQ6"/>
<dbReference type="GeneID" id="2546803"/>
<dbReference type="KEGG" id="ppp:2546803"/>
<dbReference type="InParanoid" id="Q6YXQ6"/>
<dbReference type="OrthoDB" id="543408at2759"/>
<dbReference type="Proteomes" id="UP000006727">
    <property type="component" value="Chloroplast"/>
</dbReference>
<dbReference type="GO" id="GO:0009535">
    <property type="term" value="C:chloroplast thylakoid membrane"/>
    <property type="evidence" value="ECO:0007669"/>
    <property type="project" value="UniProtKB-SubCell"/>
</dbReference>
<dbReference type="GO" id="GO:0008137">
    <property type="term" value="F:NADH dehydrogenase (ubiquinone) activity"/>
    <property type="evidence" value="ECO:0007669"/>
    <property type="project" value="InterPro"/>
</dbReference>
<dbReference type="GO" id="GO:0048038">
    <property type="term" value="F:quinone binding"/>
    <property type="evidence" value="ECO:0007669"/>
    <property type="project" value="UniProtKB-KW"/>
</dbReference>
<dbReference type="GO" id="GO:0042773">
    <property type="term" value="P:ATP synthesis coupled electron transport"/>
    <property type="evidence" value="ECO:0007669"/>
    <property type="project" value="InterPro"/>
</dbReference>
<dbReference type="GO" id="GO:0015990">
    <property type="term" value="P:electron transport coupled proton transport"/>
    <property type="evidence" value="ECO:0000318"/>
    <property type="project" value="GO_Central"/>
</dbReference>
<dbReference type="Gene3D" id="1.20.5.2700">
    <property type="match status" value="1"/>
</dbReference>
<dbReference type="InterPro" id="IPR002128">
    <property type="entry name" value="NADH_UbQ_OxRdtase_chlpt_su5_C"/>
</dbReference>
<dbReference type="InterPro" id="IPR018393">
    <property type="entry name" value="NADHpl_OxRdtase_5_subgr"/>
</dbReference>
<dbReference type="InterPro" id="IPR001750">
    <property type="entry name" value="ND/Mrp_TM"/>
</dbReference>
<dbReference type="InterPro" id="IPR003945">
    <property type="entry name" value="NU5C-like"/>
</dbReference>
<dbReference type="InterPro" id="IPR001516">
    <property type="entry name" value="Proton_antipo_N"/>
</dbReference>
<dbReference type="NCBIfam" id="TIGR01974">
    <property type="entry name" value="NDH_I_L"/>
    <property type="match status" value="1"/>
</dbReference>
<dbReference type="NCBIfam" id="NF005141">
    <property type="entry name" value="PRK06590.1"/>
    <property type="match status" value="1"/>
</dbReference>
<dbReference type="PANTHER" id="PTHR42829">
    <property type="entry name" value="NADH-UBIQUINONE OXIDOREDUCTASE CHAIN 5"/>
    <property type="match status" value="1"/>
</dbReference>
<dbReference type="PANTHER" id="PTHR42829:SF2">
    <property type="entry name" value="NADH-UBIQUINONE OXIDOREDUCTASE CHAIN 5"/>
    <property type="match status" value="1"/>
</dbReference>
<dbReference type="Pfam" id="PF01010">
    <property type="entry name" value="Proton_antipo_C"/>
    <property type="match status" value="1"/>
</dbReference>
<dbReference type="Pfam" id="PF00361">
    <property type="entry name" value="Proton_antipo_M"/>
    <property type="match status" value="1"/>
</dbReference>
<dbReference type="Pfam" id="PF00662">
    <property type="entry name" value="Proton_antipo_N"/>
    <property type="match status" value="1"/>
</dbReference>
<dbReference type="PRINTS" id="PR01434">
    <property type="entry name" value="NADHDHGNASE5"/>
</dbReference>
<dbReference type="PRINTS" id="PR01435">
    <property type="entry name" value="NPOXDRDTASE5"/>
</dbReference>
<sequence length="720" mass="81924">MEFIYQFVWIVPFFPFIASILIGVNLLFFPKSTKSLREIWAIFSILLLSIAMIFSFNILWQQINDNIIYRYLWSWIFDNKIDFKIGFLIDPLTSIMLVLITTVGVLVMIYSDSYMSYDQGYVRFFAYLSLFTASMLGLVLSPNLIQIYIFWELVGMCSYLLIGFWFTRPSAANACQKAFVTNRIGDFGLLLGILGFYWITGSFEFEILFKRFNDLVINHEVNLYFANFCALLLFLGPIAKSAQFPLHIWLPDAMEGPTPISALIHAATMVAAGIFLVARWFPLFQLLPFVMTIISWVGAITAFLGATIALAQTDLKKGLAYSTMSQLGYMMLALGIGSYQAGLFHLITHAYSKALLFLGSGSVIHSVESIVGYSPNKCQNMAFMGGLRKYMPITGITFLLGTFSLCGIPPFACFWSKDEIITDSWLYSSTLGSISLVTAGLTAFYMFRIYFLTFEGDLRVNLNKVAFTYPVSIWGELNLNKKNSNKNKFVLNKYDIFFETDQNENQTDNLSFFSDIKKLKYPKESDNKMLFPLLVLTLPTLFIGFLGAPFPEGQIGSDLLSQWLYPVFKSAEEITSGNWLEFGLNAINSLSVVFSGIFIAFILYGPFSLFPQNLEKNIEFSLEKNLNSFFSFIYNWSYFRGYIDVYYNIVFVKGTRLLAQSLSFFDEWIIDGFVNGFGILTFFEGESIKYLEGGRISFYLFGLIFGMIILLFIGFFGAMF</sequence>
<keyword id="KW-0150">Chloroplast</keyword>
<keyword id="KW-0472">Membrane</keyword>
<keyword id="KW-0520">NAD</keyword>
<keyword id="KW-0521">NADP</keyword>
<keyword id="KW-0934">Plastid</keyword>
<keyword id="KW-0618">Plastoquinone</keyword>
<keyword id="KW-0874">Quinone</keyword>
<keyword id="KW-1185">Reference proteome</keyword>
<keyword id="KW-0793">Thylakoid</keyword>
<keyword id="KW-1278">Translocase</keyword>
<keyword id="KW-0812">Transmembrane</keyword>
<keyword id="KW-1133">Transmembrane helix</keyword>
<keyword id="KW-0813">Transport</keyword>